<reference key="1">
    <citation type="submission" date="2006-01" db="EMBL/GenBank/DDBJ databases">
        <title>Complete sequence of Novosphingobium aromaticivorans DSM 12444.</title>
        <authorList>
            <consortium name="US DOE Joint Genome Institute"/>
            <person name="Copeland A."/>
            <person name="Lucas S."/>
            <person name="Lapidus A."/>
            <person name="Barry K."/>
            <person name="Detter J.C."/>
            <person name="Glavina T."/>
            <person name="Hammon N."/>
            <person name="Israni S."/>
            <person name="Pitluck S."/>
            <person name="Chain P."/>
            <person name="Malfatti S."/>
            <person name="Shin M."/>
            <person name="Vergez L."/>
            <person name="Schmutz J."/>
            <person name="Larimer F."/>
            <person name="Land M."/>
            <person name="Kyrpides N."/>
            <person name="Ivanova N."/>
            <person name="Fredrickson J."/>
            <person name="Balkwill D."/>
            <person name="Romine M.F."/>
            <person name="Richardson P."/>
        </authorList>
    </citation>
    <scope>NUCLEOTIDE SEQUENCE [LARGE SCALE GENOMIC DNA]</scope>
    <source>
        <strain>ATCC 700278 / DSM 12444 / CCUG 56034 / CIP 105152 / NBRC 16084 / F199</strain>
    </source>
</reference>
<proteinExistence type="inferred from homology"/>
<comment type="function">
    <text evidence="1">Specifically methylates the uridine in position 2552 of 23S rRNA at the 2'-O position of the ribose in the fully assembled 50S ribosomal subunit.</text>
</comment>
<comment type="catalytic activity">
    <reaction evidence="1">
        <text>uridine(2552) in 23S rRNA + S-adenosyl-L-methionine = 2'-O-methyluridine(2552) in 23S rRNA + S-adenosyl-L-homocysteine + H(+)</text>
        <dbReference type="Rhea" id="RHEA:42720"/>
        <dbReference type="Rhea" id="RHEA-COMP:10202"/>
        <dbReference type="Rhea" id="RHEA-COMP:10203"/>
        <dbReference type="ChEBI" id="CHEBI:15378"/>
        <dbReference type="ChEBI" id="CHEBI:57856"/>
        <dbReference type="ChEBI" id="CHEBI:59789"/>
        <dbReference type="ChEBI" id="CHEBI:65315"/>
        <dbReference type="ChEBI" id="CHEBI:74478"/>
        <dbReference type="EC" id="2.1.1.166"/>
    </reaction>
</comment>
<comment type="subcellular location">
    <subcellularLocation>
        <location evidence="1">Cytoplasm</location>
    </subcellularLocation>
</comment>
<comment type="similarity">
    <text evidence="1">Belongs to the class I-like SAM-binding methyltransferase superfamily. RNA methyltransferase RlmE family.</text>
</comment>
<gene>
    <name evidence="1" type="primary">rlmE</name>
    <name evidence="1" type="synonym">ftsJ</name>
    <name evidence="1" type="synonym">rrmJ</name>
    <name type="ordered locus">Saro_0472</name>
</gene>
<evidence type="ECO:0000255" key="1">
    <source>
        <dbReference type="HAMAP-Rule" id="MF_01547"/>
    </source>
</evidence>
<evidence type="ECO:0000256" key="2">
    <source>
        <dbReference type="SAM" id="MobiDB-lite"/>
    </source>
</evidence>
<protein>
    <recommendedName>
        <fullName evidence="1">Ribosomal RNA large subunit methyltransferase E</fullName>
        <ecNumber evidence="1">2.1.1.166</ecNumber>
    </recommendedName>
    <alternativeName>
        <fullName evidence="1">23S rRNA Um2552 methyltransferase</fullName>
    </alternativeName>
    <alternativeName>
        <fullName evidence="1">rRNA (uridine-2'-O-)-methyltransferase</fullName>
    </alternativeName>
</protein>
<feature type="chain" id="PRO_0000282769" description="Ribosomal RNA large subunit methyltransferase E">
    <location>
        <begin position="1"/>
        <end position="222"/>
    </location>
</feature>
<feature type="region of interest" description="Disordered" evidence="2">
    <location>
        <begin position="1"/>
        <end position="22"/>
    </location>
</feature>
<feature type="compositionally biased region" description="Basic and acidic residues" evidence="2">
    <location>
        <begin position="1"/>
        <end position="13"/>
    </location>
</feature>
<feature type="active site" description="Proton acceptor" evidence="1">
    <location>
        <position position="174"/>
    </location>
</feature>
<feature type="binding site" evidence="1">
    <location>
        <position position="75"/>
    </location>
    <ligand>
        <name>S-adenosyl-L-methionine</name>
        <dbReference type="ChEBI" id="CHEBI:59789"/>
    </ligand>
</feature>
<feature type="binding site" evidence="1">
    <location>
        <position position="77"/>
    </location>
    <ligand>
        <name>S-adenosyl-L-methionine</name>
        <dbReference type="ChEBI" id="CHEBI:59789"/>
    </ligand>
</feature>
<feature type="binding site" evidence="1">
    <location>
        <position position="94"/>
    </location>
    <ligand>
        <name>S-adenosyl-L-methionine</name>
        <dbReference type="ChEBI" id="CHEBI:59789"/>
    </ligand>
</feature>
<feature type="binding site" evidence="1">
    <location>
        <position position="110"/>
    </location>
    <ligand>
        <name>S-adenosyl-L-methionine</name>
        <dbReference type="ChEBI" id="CHEBI:59789"/>
    </ligand>
</feature>
<feature type="binding site" evidence="1">
    <location>
        <position position="134"/>
    </location>
    <ligand>
        <name>S-adenosyl-L-methionine</name>
        <dbReference type="ChEBI" id="CHEBI:59789"/>
    </ligand>
</feature>
<organism>
    <name type="scientific">Novosphingobium aromaticivorans (strain ATCC 700278 / DSM 12444 / CCUG 56034 / CIP 105152 / NBRC 16084 / F199)</name>
    <dbReference type="NCBI Taxonomy" id="279238"/>
    <lineage>
        <taxon>Bacteria</taxon>
        <taxon>Pseudomonadati</taxon>
        <taxon>Pseudomonadota</taxon>
        <taxon>Alphaproteobacteria</taxon>
        <taxon>Sphingomonadales</taxon>
        <taxon>Sphingomonadaceae</taxon>
        <taxon>Novosphingobium</taxon>
    </lineage>
</organism>
<keyword id="KW-0963">Cytoplasm</keyword>
<keyword id="KW-0489">Methyltransferase</keyword>
<keyword id="KW-1185">Reference proteome</keyword>
<keyword id="KW-0698">rRNA processing</keyword>
<keyword id="KW-0949">S-adenosyl-L-methionine</keyword>
<keyword id="KW-0808">Transferase</keyword>
<accession>Q2GB53</accession>
<dbReference type="EC" id="2.1.1.166" evidence="1"/>
<dbReference type="EMBL" id="CP000248">
    <property type="protein sequence ID" value="ABD24920.1"/>
    <property type="molecule type" value="Genomic_DNA"/>
</dbReference>
<dbReference type="RefSeq" id="WP_011444134.1">
    <property type="nucleotide sequence ID" value="NC_007794.1"/>
</dbReference>
<dbReference type="SMR" id="Q2GB53"/>
<dbReference type="STRING" id="279238.Saro_0472"/>
<dbReference type="KEGG" id="nar:Saro_0472"/>
<dbReference type="eggNOG" id="COG0293">
    <property type="taxonomic scope" value="Bacteria"/>
</dbReference>
<dbReference type="HOGENOM" id="CLU_009422_4_0_5"/>
<dbReference type="Proteomes" id="UP000009134">
    <property type="component" value="Chromosome"/>
</dbReference>
<dbReference type="GO" id="GO:0005737">
    <property type="term" value="C:cytoplasm"/>
    <property type="evidence" value="ECO:0007669"/>
    <property type="project" value="UniProtKB-SubCell"/>
</dbReference>
<dbReference type="GO" id="GO:0008650">
    <property type="term" value="F:rRNA (uridine-2'-O-)-methyltransferase activity"/>
    <property type="evidence" value="ECO:0007669"/>
    <property type="project" value="UniProtKB-UniRule"/>
</dbReference>
<dbReference type="Gene3D" id="3.40.50.150">
    <property type="entry name" value="Vaccinia Virus protein VP39"/>
    <property type="match status" value="1"/>
</dbReference>
<dbReference type="HAMAP" id="MF_01547">
    <property type="entry name" value="RNA_methyltr_E"/>
    <property type="match status" value="1"/>
</dbReference>
<dbReference type="InterPro" id="IPR050082">
    <property type="entry name" value="RNA_methyltr_RlmE"/>
</dbReference>
<dbReference type="InterPro" id="IPR002877">
    <property type="entry name" value="RNA_MeTrfase_FtsJ_dom"/>
</dbReference>
<dbReference type="InterPro" id="IPR015507">
    <property type="entry name" value="rRNA-MeTfrase_E"/>
</dbReference>
<dbReference type="InterPro" id="IPR029063">
    <property type="entry name" value="SAM-dependent_MTases_sf"/>
</dbReference>
<dbReference type="PANTHER" id="PTHR10920">
    <property type="entry name" value="RIBOSOMAL RNA METHYLTRANSFERASE"/>
    <property type="match status" value="1"/>
</dbReference>
<dbReference type="PANTHER" id="PTHR10920:SF18">
    <property type="entry name" value="RRNA METHYLTRANSFERASE 2, MITOCHONDRIAL"/>
    <property type="match status" value="1"/>
</dbReference>
<dbReference type="Pfam" id="PF01728">
    <property type="entry name" value="FtsJ"/>
    <property type="match status" value="1"/>
</dbReference>
<dbReference type="PIRSF" id="PIRSF005461">
    <property type="entry name" value="23S_rRNA_mtase"/>
    <property type="match status" value="1"/>
</dbReference>
<dbReference type="SUPFAM" id="SSF53335">
    <property type="entry name" value="S-adenosyl-L-methionine-dependent methyltransferases"/>
    <property type="match status" value="1"/>
</dbReference>
<name>RLME_NOVAD</name>
<sequence length="222" mass="24150">MSRSDKNPHERLKTAKKRTASSARWLSRQLNDPYVKKAKAEGWRSRAAFKLIELDEKFGLLKGAKRVVDLGIAPGGWSQVVRKKAPAAKIVGIDLLPTEPIEGVTIFEMDFMADEAPEALQSALDGPPDLVLSDMAANTVGHKQTDHLRTMGLVETAVDFAVQTLAPGGAFVAKVFAGGTDTELLAILKKNFTTVKHAKPPASRKDSSEWYVIAQGFKGRPD</sequence>